<proteinExistence type="inferred from homology"/>
<organismHost>
    <name type="scientific">Aves</name>
    <dbReference type="NCBI Taxonomy" id="8782"/>
</organismHost>
<organismHost>
    <name type="scientific">Homo sapiens</name>
    <name type="common">Human</name>
    <dbReference type="NCBI Taxonomy" id="9606"/>
</organismHost>
<organismHost>
    <name type="scientific">Sus scrofa</name>
    <name type="common">Pig</name>
    <dbReference type="NCBI Taxonomy" id="9823"/>
</organismHost>
<protein>
    <recommendedName>
        <fullName evidence="1">Nuclear export protein</fullName>
        <shortName evidence="1">NEP</shortName>
    </recommendedName>
    <alternativeName>
        <fullName evidence="1">Non-structural protein 2</fullName>
        <shortName evidence="1">NS2</shortName>
    </alternativeName>
</protein>
<dbReference type="EMBL" id="K00578">
    <property type="protein sequence ID" value="AAA43539.1"/>
    <property type="molecule type" value="Genomic_RNA"/>
</dbReference>
<dbReference type="EMBL" id="CY010376">
    <property type="protein sequence ID" value="ABD95356.1"/>
    <property type="molecule type" value="Genomic_RNA"/>
</dbReference>
<dbReference type="EMBL" id="DQ508901">
    <property type="protein sequence ID" value="ABF21217.1"/>
    <property type="molecule type" value="Genomic_RNA"/>
</dbReference>
<dbReference type="SMR" id="P03504"/>
<dbReference type="Proteomes" id="UP000007793">
    <property type="component" value="Genome"/>
</dbReference>
<dbReference type="Proteomes" id="UP000121508">
    <property type="component" value="Genome"/>
</dbReference>
<dbReference type="GO" id="GO:0042025">
    <property type="term" value="C:host cell nucleus"/>
    <property type="evidence" value="ECO:0007669"/>
    <property type="project" value="UniProtKB-SubCell"/>
</dbReference>
<dbReference type="GO" id="GO:0044423">
    <property type="term" value="C:virion component"/>
    <property type="evidence" value="ECO:0007669"/>
    <property type="project" value="UniProtKB-UniRule"/>
</dbReference>
<dbReference type="GO" id="GO:0039675">
    <property type="term" value="P:exit of virus from host cell nucleus through nuclear pore"/>
    <property type="evidence" value="ECO:0007669"/>
    <property type="project" value="UniProtKB-UniRule"/>
</dbReference>
<dbReference type="Gene3D" id="1.10.287.230">
    <property type="match status" value="1"/>
</dbReference>
<dbReference type="Gene3D" id="1.10.287.10">
    <property type="entry name" value="S15/NS1, RNA-binding"/>
    <property type="match status" value="1"/>
</dbReference>
<dbReference type="HAMAP" id="MF_04067">
    <property type="entry name" value="INFV_NEP"/>
    <property type="match status" value="1"/>
</dbReference>
<dbReference type="InterPro" id="IPR000968">
    <property type="entry name" value="Flu_NS2"/>
</dbReference>
<dbReference type="Pfam" id="PF00601">
    <property type="entry name" value="Flu_NS2"/>
    <property type="match status" value="1"/>
</dbReference>
<dbReference type="SUPFAM" id="SSF101156">
    <property type="entry name" value="Nonstructural protein ns2, Nep, M1-binding domain"/>
    <property type="match status" value="1"/>
</dbReference>
<name>NEP_I77AB</name>
<feature type="chain" id="PRO_0000079012" description="Nuclear export protein">
    <location>
        <begin position="1"/>
        <end position="121"/>
    </location>
</feature>
<feature type="short sequence motif" description="Nuclear export signal" evidence="1">
    <location>
        <begin position="12"/>
        <end position="21"/>
    </location>
</feature>
<feature type="short sequence motif" description="Nuclear export signal" evidence="1">
    <location>
        <begin position="85"/>
        <end position="94"/>
    </location>
</feature>
<comment type="function">
    <text evidence="1">Mediates the nuclear export of encapsidated genomic RNAs (ribonucleoproteins, RNPs). Acts as an adapter between viral RNPs complexes and the nuclear export machinery of the cell. Possesses no intrinsic RNA-binding activity, but includes a C-terminal M1-binding domain. This domain is believed to allow recognition of RNPs bound to the protein M1. Since protein M1 is not available in large quantities before late stages of infection, such an indirect recognition mechanism probably ensures that genomic RNPs are not exported from the host nucleus until sufficient quantities of viral mRNA and progeny genomic RNA have been synthesized. Furthermore, the RNPs enter the host cytoplasm only when associated with the M1 protein that is necessary to guide them to the plasma membrane. May down-regulate viral RNA synthesis when overproduced.</text>
</comment>
<comment type="subunit">
    <text evidence="1">Interacts with protein M1. May interact with host nucleoporin RAB/HRB and exportin XPO1/CRM1.</text>
</comment>
<comment type="subcellular location">
    <subcellularLocation>
        <location evidence="1">Virion</location>
    </subcellularLocation>
    <subcellularLocation>
        <location evidence="1">Host nucleus</location>
    </subcellularLocation>
</comment>
<comment type="alternative products">
    <event type="alternative splicing"/>
    <isoform>
        <id>P03504-1</id>
        <name>NEP</name>
        <name>NS2</name>
        <sequence type="displayed"/>
    </isoform>
    <isoform>
        <id>P03498-1</id>
        <name>NS1</name>
        <sequence type="external"/>
    </isoform>
</comment>
<comment type="miscellaneous">
    <text>Average number present in a viral particle is estimated to be 130-200 molecules.</text>
</comment>
<comment type="similarity">
    <text evidence="1">Belongs to the influenza viruses NEP family.</text>
</comment>
<sequence>MDPNTVSSFQDILMRMSKMQLGSSSEDLNGMITQFESLKLYRDSLGEAVMRMGDLHSLQNRNGKWREQLGQKFEEIRWLIEEVRHRLKITENSFEQITFMQALQLLFEVEQEIRTFSFQLI</sequence>
<reference key="1">
    <citation type="journal article" date="1983" name="J. Virol.">
        <title>Sequential mutations in the NS genes of influenza virus field strains.</title>
        <authorList>
            <person name="Krystal M."/>
            <person name="Buonagurio D.A."/>
            <person name="Young J.F."/>
            <person name="Palese P."/>
        </authorList>
    </citation>
    <scope>NUCLEOTIDE SEQUENCE [GENOMIC RNA]</scope>
</reference>
<reference key="2">
    <citation type="submission" date="2006-03" db="EMBL/GenBank/DDBJ databases">
        <title>The NIAID influenza genome sequencing project.</title>
        <authorList>
            <person name="Ghedin E."/>
            <person name="Spiro D."/>
            <person name="Miller N."/>
            <person name="Zaborsky J."/>
            <person name="Feldblyum T."/>
            <person name="Subbu V."/>
            <person name="Shumway M."/>
            <person name="Sparenborg J."/>
            <person name="Groveman L."/>
            <person name="Halpin R."/>
            <person name="Sitz J."/>
            <person name="Koo H."/>
            <person name="Salzberg S.L."/>
            <person name="Webster R.G."/>
            <person name="Hoffmann E."/>
            <person name="Krauss S."/>
            <person name="Naeve C."/>
            <person name="Bao Y."/>
            <person name="Bolotov P."/>
            <person name="Dernovoy D."/>
            <person name="Kiryutin B."/>
            <person name="Lipman D.J."/>
            <person name="Tatusova T."/>
        </authorList>
    </citation>
    <scope>NUCLEOTIDE SEQUENCE [GENOMIC RNA]</scope>
</reference>
<reference key="3">
    <citation type="submission" date="2006-04" db="EMBL/GenBank/DDBJ databases">
        <title>Complete genome sequencing and analysis of selected influenza virus vaccine strains spanning six decades (1933-1999).</title>
        <authorList>
            <person name="Mbawuike I.N."/>
            <person name="Zhang Y."/>
            <person name="Yamada R.E."/>
            <person name="Nino D."/>
            <person name="Bui H.-H."/>
            <person name="Sette A."/>
            <person name="Couch R.B."/>
        </authorList>
    </citation>
    <scope>NUCLEOTIDE SEQUENCE [GENOMIC RNA]</scope>
</reference>
<gene>
    <name evidence="1" type="primary">NS</name>
</gene>
<keyword id="KW-0025">Alternative splicing</keyword>
<keyword id="KW-1048">Host nucleus</keyword>
<keyword id="KW-0945">Host-virus interaction</keyword>
<keyword id="KW-0813">Transport</keyword>
<keyword id="KW-0946">Virion</keyword>
<organism>
    <name type="scientific">Influenza A virus (strain A/USSR/90/1977 H1N1)</name>
    <dbReference type="NCBI Taxonomy" id="381516"/>
    <lineage>
        <taxon>Viruses</taxon>
        <taxon>Riboviria</taxon>
        <taxon>Orthornavirae</taxon>
        <taxon>Negarnaviricota</taxon>
        <taxon>Polyploviricotina</taxon>
        <taxon>Insthoviricetes</taxon>
        <taxon>Articulavirales</taxon>
        <taxon>Orthomyxoviridae</taxon>
        <taxon>Alphainfluenzavirus</taxon>
        <taxon>Alphainfluenzavirus influenzae</taxon>
        <taxon>Influenza A virus</taxon>
    </lineage>
</organism>
<evidence type="ECO:0000255" key="1">
    <source>
        <dbReference type="HAMAP-Rule" id="MF_04067"/>
    </source>
</evidence>
<accession>P03504</accession>
<accession>Q1WP04</accession>